<evidence type="ECO:0000255" key="1">
    <source>
        <dbReference type="HAMAP-Rule" id="MF_00382"/>
    </source>
</evidence>
<evidence type="ECO:0000305" key="2"/>
<protein>
    <recommendedName>
        <fullName evidence="1">Large ribosomal subunit protein bL20</fullName>
    </recommendedName>
    <alternativeName>
        <fullName evidence="2">50S ribosomal protein L20</fullName>
    </alternativeName>
</protein>
<accession>Q3IL78</accession>
<reference key="1">
    <citation type="journal article" date="2005" name="Genome Res.">
        <title>Coping with cold: the genome of the versatile marine Antarctica bacterium Pseudoalteromonas haloplanktis TAC125.</title>
        <authorList>
            <person name="Medigue C."/>
            <person name="Krin E."/>
            <person name="Pascal G."/>
            <person name="Barbe V."/>
            <person name="Bernsel A."/>
            <person name="Bertin P.N."/>
            <person name="Cheung F."/>
            <person name="Cruveiller S."/>
            <person name="D'Amico S."/>
            <person name="Duilio A."/>
            <person name="Fang G."/>
            <person name="Feller G."/>
            <person name="Ho C."/>
            <person name="Mangenot S."/>
            <person name="Marino G."/>
            <person name="Nilsson J."/>
            <person name="Parrilli E."/>
            <person name="Rocha E.P.C."/>
            <person name="Rouy Z."/>
            <person name="Sekowska A."/>
            <person name="Tutino M.L."/>
            <person name="Vallenet D."/>
            <person name="von Heijne G."/>
            <person name="Danchin A."/>
        </authorList>
    </citation>
    <scope>NUCLEOTIDE SEQUENCE [LARGE SCALE GENOMIC DNA]</scope>
    <source>
        <strain>TAC 125</strain>
    </source>
</reference>
<comment type="function">
    <text evidence="1">Binds directly to 23S ribosomal RNA and is necessary for the in vitro assembly process of the 50S ribosomal subunit. It is not involved in the protein synthesizing functions of that subunit.</text>
</comment>
<comment type="similarity">
    <text evidence="1">Belongs to the bacterial ribosomal protein bL20 family.</text>
</comment>
<sequence>MARVKRGVVARARHKKVLKQAKGYYGARSRVYRVAFQAVTKAGQYAYRDRRAKKRTFRQLWIARINAASRQNGLSYSRFISGLKKTSVEIDRKILADIAVYDQVAFAALVEKAKEGLAAA</sequence>
<feature type="chain" id="PRO_0000243714" description="Large ribosomal subunit protein bL20">
    <location>
        <begin position="1"/>
        <end position="120"/>
    </location>
</feature>
<dbReference type="EMBL" id="CR954246">
    <property type="protein sequence ID" value="CAI86474.1"/>
    <property type="molecule type" value="Genomic_DNA"/>
</dbReference>
<dbReference type="SMR" id="Q3IL78"/>
<dbReference type="STRING" id="326442.PSHAa1399"/>
<dbReference type="KEGG" id="pha:PSHAa1399"/>
<dbReference type="eggNOG" id="COG0292">
    <property type="taxonomic scope" value="Bacteria"/>
</dbReference>
<dbReference type="HOGENOM" id="CLU_123265_0_1_6"/>
<dbReference type="BioCyc" id="PHAL326442:PSHA_RS06880-MONOMER"/>
<dbReference type="Proteomes" id="UP000006843">
    <property type="component" value="Chromosome I"/>
</dbReference>
<dbReference type="GO" id="GO:1990904">
    <property type="term" value="C:ribonucleoprotein complex"/>
    <property type="evidence" value="ECO:0007669"/>
    <property type="project" value="UniProtKB-KW"/>
</dbReference>
<dbReference type="GO" id="GO:0005840">
    <property type="term" value="C:ribosome"/>
    <property type="evidence" value="ECO:0007669"/>
    <property type="project" value="UniProtKB-KW"/>
</dbReference>
<dbReference type="GO" id="GO:0019843">
    <property type="term" value="F:rRNA binding"/>
    <property type="evidence" value="ECO:0007669"/>
    <property type="project" value="UniProtKB-UniRule"/>
</dbReference>
<dbReference type="GO" id="GO:0003735">
    <property type="term" value="F:structural constituent of ribosome"/>
    <property type="evidence" value="ECO:0007669"/>
    <property type="project" value="InterPro"/>
</dbReference>
<dbReference type="GO" id="GO:0000027">
    <property type="term" value="P:ribosomal large subunit assembly"/>
    <property type="evidence" value="ECO:0007669"/>
    <property type="project" value="UniProtKB-UniRule"/>
</dbReference>
<dbReference type="GO" id="GO:0006412">
    <property type="term" value="P:translation"/>
    <property type="evidence" value="ECO:0007669"/>
    <property type="project" value="InterPro"/>
</dbReference>
<dbReference type="CDD" id="cd07026">
    <property type="entry name" value="Ribosomal_L20"/>
    <property type="match status" value="1"/>
</dbReference>
<dbReference type="FunFam" id="1.10.1900.20:FF:000001">
    <property type="entry name" value="50S ribosomal protein L20"/>
    <property type="match status" value="1"/>
</dbReference>
<dbReference type="Gene3D" id="6.10.160.10">
    <property type="match status" value="1"/>
</dbReference>
<dbReference type="Gene3D" id="1.10.1900.20">
    <property type="entry name" value="Ribosomal protein L20"/>
    <property type="match status" value="1"/>
</dbReference>
<dbReference type="HAMAP" id="MF_00382">
    <property type="entry name" value="Ribosomal_bL20"/>
    <property type="match status" value="1"/>
</dbReference>
<dbReference type="InterPro" id="IPR005813">
    <property type="entry name" value="Ribosomal_bL20"/>
</dbReference>
<dbReference type="InterPro" id="IPR049946">
    <property type="entry name" value="RIBOSOMAL_L20_CS"/>
</dbReference>
<dbReference type="InterPro" id="IPR035566">
    <property type="entry name" value="Ribosomal_protein_bL20_C"/>
</dbReference>
<dbReference type="NCBIfam" id="TIGR01032">
    <property type="entry name" value="rplT_bact"/>
    <property type="match status" value="1"/>
</dbReference>
<dbReference type="PANTHER" id="PTHR10986">
    <property type="entry name" value="39S RIBOSOMAL PROTEIN L20"/>
    <property type="match status" value="1"/>
</dbReference>
<dbReference type="Pfam" id="PF00453">
    <property type="entry name" value="Ribosomal_L20"/>
    <property type="match status" value="1"/>
</dbReference>
<dbReference type="PRINTS" id="PR00062">
    <property type="entry name" value="RIBOSOMALL20"/>
</dbReference>
<dbReference type="SUPFAM" id="SSF74731">
    <property type="entry name" value="Ribosomal protein L20"/>
    <property type="match status" value="1"/>
</dbReference>
<dbReference type="PROSITE" id="PS00937">
    <property type="entry name" value="RIBOSOMAL_L20"/>
    <property type="match status" value="1"/>
</dbReference>
<gene>
    <name evidence="1" type="primary">rplT</name>
    <name type="ordered locus">PSHAa1399</name>
</gene>
<proteinExistence type="inferred from homology"/>
<organism>
    <name type="scientific">Pseudoalteromonas translucida (strain TAC 125)</name>
    <dbReference type="NCBI Taxonomy" id="326442"/>
    <lineage>
        <taxon>Bacteria</taxon>
        <taxon>Pseudomonadati</taxon>
        <taxon>Pseudomonadota</taxon>
        <taxon>Gammaproteobacteria</taxon>
        <taxon>Alteromonadales</taxon>
        <taxon>Pseudoalteromonadaceae</taxon>
        <taxon>Pseudoalteromonas</taxon>
    </lineage>
</organism>
<name>RL20_PSET1</name>
<keyword id="KW-1185">Reference proteome</keyword>
<keyword id="KW-0687">Ribonucleoprotein</keyword>
<keyword id="KW-0689">Ribosomal protein</keyword>
<keyword id="KW-0694">RNA-binding</keyword>
<keyword id="KW-0699">rRNA-binding</keyword>